<proteinExistence type="inferred from homology"/>
<name>SPEA_SHESH</name>
<keyword id="KW-0210">Decarboxylase</keyword>
<keyword id="KW-0456">Lyase</keyword>
<keyword id="KW-0460">Magnesium</keyword>
<keyword id="KW-0479">Metal-binding</keyword>
<keyword id="KW-0620">Polyamine biosynthesis</keyword>
<keyword id="KW-0663">Pyridoxal phosphate</keyword>
<keyword id="KW-1185">Reference proteome</keyword>
<keyword id="KW-0745">Spermidine biosynthesis</keyword>
<protein>
    <recommendedName>
        <fullName evidence="1">Biosynthetic arginine decarboxylase</fullName>
        <shortName evidence="1">ADC</shortName>
        <ecNumber evidence="1">4.1.1.19</ecNumber>
    </recommendedName>
</protein>
<gene>
    <name evidence="1" type="primary">speA</name>
    <name type="ordered locus">Ssed_2609</name>
</gene>
<evidence type="ECO:0000255" key="1">
    <source>
        <dbReference type="HAMAP-Rule" id="MF_01417"/>
    </source>
</evidence>
<dbReference type="EC" id="4.1.1.19" evidence="1"/>
<dbReference type="EMBL" id="CP000821">
    <property type="protein sequence ID" value="ABV37216.1"/>
    <property type="molecule type" value="Genomic_DNA"/>
</dbReference>
<dbReference type="RefSeq" id="WP_012142948.1">
    <property type="nucleotide sequence ID" value="NC_009831.1"/>
</dbReference>
<dbReference type="SMR" id="A8FWJ3"/>
<dbReference type="STRING" id="425104.Ssed_2609"/>
<dbReference type="KEGG" id="sse:Ssed_2609"/>
<dbReference type="eggNOG" id="COG1166">
    <property type="taxonomic scope" value="Bacteria"/>
</dbReference>
<dbReference type="HOGENOM" id="CLU_027243_1_0_6"/>
<dbReference type="OrthoDB" id="9802658at2"/>
<dbReference type="UniPathway" id="UPA00186">
    <property type="reaction ID" value="UER00284"/>
</dbReference>
<dbReference type="Proteomes" id="UP000002015">
    <property type="component" value="Chromosome"/>
</dbReference>
<dbReference type="GO" id="GO:0008792">
    <property type="term" value="F:arginine decarboxylase activity"/>
    <property type="evidence" value="ECO:0007669"/>
    <property type="project" value="UniProtKB-UniRule"/>
</dbReference>
<dbReference type="GO" id="GO:0046872">
    <property type="term" value="F:metal ion binding"/>
    <property type="evidence" value="ECO:0007669"/>
    <property type="project" value="UniProtKB-KW"/>
</dbReference>
<dbReference type="GO" id="GO:0006527">
    <property type="term" value="P:arginine catabolic process"/>
    <property type="evidence" value="ECO:0007669"/>
    <property type="project" value="InterPro"/>
</dbReference>
<dbReference type="GO" id="GO:0033388">
    <property type="term" value="P:putrescine biosynthetic process from arginine"/>
    <property type="evidence" value="ECO:0007669"/>
    <property type="project" value="TreeGrafter"/>
</dbReference>
<dbReference type="GO" id="GO:0008295">
    <property type="term" value="P:spermidine biosynthetic process"/>
    <property type="evidence" value="ECO:0007669"/>
    <property type="project" value="UniProtKB-UniRule"/>
</dbReference>
<dbReference type="CDD" id="cd06830">
    <property type="entry name" value="PLPDE_III_ADC"/>
    <property type="match status" value="1"/>
</dbReference>
<dbReference type="FunFam" id="1.10.287.3440:FF:000001">
    <property type="entry name" value="Biosynthetic arginine decarboxylase"/>
    <property type="match status" value="1"/>
</dbReference>
<dbReference type="FunFam" id="2.40.37.10:FF:000001">
    <property type="entry name" value="Biosynthetic arginine decarboxylase"/>
    <property type="match status" value="1"/>
</dbReference>
<dbReference type="FunFam" id="3.20.20.10:FF:000001">
    <property type="entry name" value="Biosynthetic arginine decarboxylase"/>
    <property type="match status" value="1"/>
</dbReference>
<dbReference type="Gene3D" id="1.10.287.3440">
    <property type="match status" value="1"/>
</dbReference>
<dbReference type="Gene3D" id="1.20.58.930">
    <property type="match status" value="1"/>
</dbReference>
<dbReference type="Gene3D" id="3.20.20.10">
    <property type="entry name" value="Alanine racemase"/>
    <property type="match status" value="1"/>
</dbReference>
<dbReference type="Gene3D" id="2.40.37.10">
    <property type="entry name" value="Lyase, Ornithine Decarboxylase, Chain A, domain 1"/>
    <property type="match status" value="1"/>
</dbReference>
<dbReference type="HAMAP" id="MF_01417">
    <property type="entry name" value="SpeA"/>
    <property type="match status" value="1"/>
</dbReference>
<dbReference type="InterPro" id="IPR009006">
    <property type="entry name" value="Ala_racemase/Decarboxylase_C"/>
</dbReference>
<dbReference type="InterPro" id="IPR040634">
    <property type="entry name" value="Arg_decarb_HB"/>
</dbReference>
<dbReference type="InterPro" id="IPR041128">
    <property type="entry name" value="Arg_decarbox_C"/>
</dbReference>
<dbReference type="InterPro" id="IPR002985">
    <property type="entry name" value="Arg_decrbxlase"/>
</dbReference>
<dbReference type="InterPro" id="IPR022644">
    <property type="entry name" value="De-COase2_N"/>
</dbReference>
<dbReference type="InterPro" id="IPR000183">
    <property type="entry name" value="Orn/DAP/Arg_de-COase"/>
</dbReference>
<dbReference type="InterPro" id="IPR029066">
    <property type="entry name" value="PLP-binding_barrel"/>
</dbReference>
<dbReference type="NCBIfam" id="NF003763">
    <property type="entry name" value="PRK05354.1"/>
    <property type="match status" value="1"/>
</dbReference>
<dbReference type="NCBIfam" id="TIGR01273">
    <property type="entry name" value="speA"/>
    <property type="match status" value="1"/>
</dbReference>
<dbReference type="PANTHER" id="PTHR43295">
    <property type="entry name" value="ARGININE DECARBOXYLASE"/>
    <property type="match status" value="1"/>
</dbReference>
<dbReference type="PANTHER" id="PTHR43295:SF9">
    <property type="entry name" value="BIOSYNTHETIC ARGININE DECARBOXYLASE"/>
    <property type="match status" value="1"/>
</dbReference>
<dbReference type="Pfam" id="PF17810">
    <property type="entry name" value="Arg_decarb_HB"/>
    <property type="match status" value="1"/>
</dbReference>
<dbReference type="Pfam" id="PF17944">
    <property type="entry name" value="Arg_decarbox_C"/>
    <property type="match status" value="1"/>
</dbReference>
<dbReference type="Pfam" id="PF02784">
    <property type="entry name" value="Orn_Arg_deC_N"/>
    <property type="match status" value="1"/>
</dbReference>
<dbReference type="PIRSF" id="PIRSF001336">
    <property type="entry name" value="Arg_decrbxlase"/>
    <property type="match status" value="1"/>
</dbReference>
<dbReference type="PRINTS" id="PR01180">
    <property type="entry name" value="ARGDCRBXLASE"/>
</dbReference>
<dbReference type="PRINTS" id="PR01179">
    <property type="entry name" value="ODADCRBXLASE"/>
</dbReference>
<dbReference type="SUPFAM" id="SSF50621">
    <property type="entry name" value="Alanine racemase C-terminal domain-like"/>
    <property type="match status" value="1"/>
</dbReference>
<dbReference type="SUPFAM" id="SSF51419">
    <property type="entry name" value="PLP-binding barrel"/>
    <property type="match status" value="1"/>
</dbReference>
<accession>A8FWJ3</accession>
<sequence>MSDWSINDARTGYNVNYWSQGLYGISDTGEVTVSPDPSHPEYSIGLNELAKDMVKSGVALPVLIRFPQILHHRVNSVCQAFNQAIQKYEYQSDYLLVYPIKVNQQQTVVEEILASQVSKEVPQLGLEAGSKPELMAVLAMAQKASSVIICNGYKDVEYIRLALIGEKLGHKVYIVLEKLSELKIILEEAEKLGVTPRLGCRVRLAFQGKGKWQASGGEKSKFGLSASQVLTVIDSLKQSQMLDSLQLLHFHLGSQIANIRDIRQGVSEAGRFYCELQKLGANVKCFDVGGGLAVDYDGTRSQSSSSMNYGLTEYANNIVSVLTDLCNEYKEPMPRIISESGRFLTAHHAVLITDVIGTEAYKPEVIEEPETEAPQLLHNMWQSWSEVSGRADQRALIEIYHDCQSDLSEVHSLFALGQLSLSERAWAEQVNLRVCHELRDVMSPKYRFHRPIIDELNEKLADKFFVNFSLFQSLPDAWGIDQVFPIMPLSGLDKAPERRAVMLDITCDSDGTIDQYVDGQGIETTIPVPTWSAESPYLIGFFLVGAYQEILGDMHNLFGDTNSAVVRLDDDGRTNIESVLAGDTVADVLRYVNLDAVSFMRTYEELVNKHIQEAERANILEELQLGLKGYTYLEDFS</sequence>
<reference key="1">
    <citation type="submission" date="2007-08" db="EMBL/GenBank/DDBJ databases">
        <title>Complete sequence of Shewanella sediminis HAW-EB3.</title>
        <authorList>
            <consortium name="US DOE Joint Genome Institute"/>
            <person name="Copeland A."/>
            <person name="Lucas S."/>
            <person name="Lapidus A."/>
            <person name="Barry K."/>
            <person name="Glavina del Rio T."/>
            <person name="Dalin E."/>
            <person name="Tice H."/>
            <person name="Pitluck S."/>
            <person name="Chertkov O."/>
            <person name="Brettin T."/>
            <person name="Bruce D."/>
            <person name="Detter J.C."/>
            <person name="Han C."/>
            <person name="Schmutz J."/>
            <person name="Larimer F."/>
            <person name="Land M."/>
            <person name="Hauser L."/>
            <person name="Kyrpides N."/>
            <person name="Kim E."/>
            <person name="Zhao J.-S."/>
            <person name="Richardson P."/>
        </authorList>
    </citation>
    <scope>NUCLEOTIDE SEQUENCE [LARGE SCALE GENOMIC DNA]</scope>
    <source>
        <strain>HAW-EB3</strain>
    </source>
</reference>
<comment type="function">
    <text evidence="1">Catalyzes the biosynthesis of agmatine from arginine.</text>
</comment>
<comment type="catalytic activity">
    <reaction evidence="1">
        <text>L-arginine + H(+) = agmatine + CO2</text>
        <dbReference type="Rhea" id="RHEA:17641"/>
        <dbReference type="ChEBI" id="CHEBI:15378"/>
        <dbReference type="ChEBI" id="CHEBI:16526"/>
        <dbReference type="ChEBI" id="CHEBI:32682"/>
        <dbReference type="ChEBI" id="CHEBI:58145"/>
        <dbReference type="EC" id="4.1.1.19"/>
    </reaction>
</comment>
<comment type="cofactor">
    <cofactor evidence="1">
        <name>Mg(2+)</name>
        <dbReference type="ChEBI" id="CHEBI:18420"/>
    </cofactor>
</comment>
<comment type="cofactor">
    <cofactor evidence="1">
        <name>pyridoxal 5'-phosphate</name>
        <dbReference type="ChEBI" id="CHEBI:597326"/>
    </cofactor>
</comment>
<comment type="pathway">
    <text evidence="1">Amine and polyamine biosynthesis; agmatine biosynthesis; agmatine from L-arginine: step 1/1.</text>
</comment>
<comment type="similarity">
    <text evidence="1">Belongs to the Orn/Lys/Arg decarboxylase class-II family. SpeA subfamily.</text>
</comment>
<feature type="chain" id="PRO_1000087409" description="Biosynthetic arginine decarboxylase">
    <location>
        <begin position="1"/>
        <end position="637"/>
    </location>
</feature>
<feature type="binding site" evidence="1">
    <location>
        <begin position="286"/>
        <end position="296"/>
    </location>
    <ligand>
        <name>substrate</name>
    </ligand>
</feature>
<feature type="modified residue" description="N6-(pyridoxal phosphate)lysine" evidence="1">
    <location>
        <position position="101"/>
    </location>
</feature>
<organism>
    <name type="scientific">Shewanella sediminis (strain HAW-EB3)</name>
    <dbReference type="NCBI Taxonomy" id="425104"/>
    <lineage>
        <taxon>Bacteria</taxon>
        <taxon>Pseudomonadati</taxon>
        <taxon>Pseudomonadota</taxon>
        <taxon>Gammaproteobacteria</taxon>
        <taxon>Alteromonadales</taxon>
        <taxon>Shewanellaceae</taxon>
        <taxon>Shewanella</taxon>
    </lineage>
</organism>